<dbReference type="EMBL" id="AM421808">
    <property type="protein sequence ID" value="CAM11114.1"/>
    <property type="molecule type" value="Genomic_DNA"/>
</dbReference>
<dbReference type="RefSeq" id="WP_002218099.1">
    <property type="nucleotide sequence ID" value="NC_008767.1"/>
</dbReference>
<dbReference type="SMR" id="A1KW58"/>
<dbReference type="KEGG" id="nmc:NMC1954"/>
<dbReference type="HOGENOM" id="CLU_080880_3_0_4"/>
<dbReference type="Proteomes" id="UP000002286">
    <property type="component" value="Chromosome"/>
</dbReference>
<dbReference type="GO" id="GO:0005737">
    <property type="term" value="C:cytoplasm"/>
    <property type="evidence" value="ECO:0007669"/>
    <property type="project" value="UniProtKB-ARBA"/>
</dbReference>
<dbReference type="GO" id="GO:0008199">
    <property type="term" value="F:ferric iron binding"/>
    <property type="evidence" value="ECO:0007669"/>
    <property type="project" value="InterPro"/>
</dbReference>
<dbReference type="GO" id="GO:0016226">
    <property type="term" value="P:iron-sulfur cluster assembly"/>
    <property type="evidence" value="ECO:0007669"/>
    <property type="project" value="UniProtKB-UniRule"/>
</dbReference>
<dbReference type="CDD" id="cd00503">
    <property type="entry name" value="Frataxin"/>
    <property type="match status" value="1"/>
</dbReference>
<dbReference type="Gene3D" id="3.30.920.10">
    <property type="entry name" value="Frataxin/CyaY"/>
    <property type="match status" value="1"/>
</dbReference>
<dbReference type="HAMAP" id="MF_00142">
    <property type="entry name" value="CyaY"/>
    <property type="match status" value="1"/>
</dbReference>
<dbReference type="InterPro" id="IPR047584">
    <property type="entry name" value="CyaY"/>
</dbReference>
<dbReference type="InterPro" id="IPR002908">
    <property type="entry name" value="Frataxin/CyaY"/>
</dbReference>
<dbReference type="InterPro" id="IPR036524">
    <property type="entry name" value="Frataxin/CyaY_sf"/>
</dbReference>
<dbReference type="InterPro" id="IPR020895">
    <property type="entry name" value="Frataxin_CS"/>
</dbReference>
<dbReference type="NCBIfam" id="TIGR03421">
    <property type="entry name" value="FeS_CyaY"/>
    <property type="match status" value="1"/>
</dbReference>
<dbReference type="PANTHER" id="PTHR16821">
    <property type="entry name" value="FRATAXIN"/>
    <property type="match status" value="1"/>
</dbReference>
<dbReference type="PANTHER" id="PTHR16821:SF2">
    <property type="entry name" value="FRATAXIN, MITOCHONDRIAL"/>
    <property type="match status" value="1"/>
</dbReference>
<dbReference type="Pfam" id="PF01491">
    <property type="entry name" value="Frataxin_Cyay"/>
    <property type="match status" value="1"/>
</dbReference>
<dbReference type="SMART" id="SM01219">
    <property type="entry name" value="Frataxin_Cyay"/>
    <property type="match status" value="1"/>
</dbReference>
<dbReference type="SUPFAM" id="SSF55387">
    <property type="entry name" value="Frataxin/Nqo15-like"/>
    <property type="match status" value="1"/>
</dbReference>
<dbReference type="PROSITE" id="PS01344">
    <property type="entry name" value="FRATAXIN_1"/>
    <property type="match status" value="1"/>
</dbReference>
<dbReference type="PROSITE" id="PS50810">
    <property type="entry name" value="FRATAXIN_2"/>
    <property type="match status" value="1"/>
</dbReference>
<gene>
    <name evidence="1" type="primary">cyaY</name>
    <name type="ordered locus">NMC1954</name>
</gene>
<name>CYAY_NEIMF</name>
<keyword id="KW-0408">Iron</keyword>
<keyword id="KW-0479">Metal-binding</keyword>
<comment type="function">
    <text evidence="1">Involved in iron-sulfur (Fe-S) cluster assembly. May act as a regulator of Fe-S biogenesis.</text>
</comment>
<comment type="similarity">
    <text evidence="1">Belongs to the frataxin family.</text>
</comment>
<evidence type="ECO:0000255" key="1">
    <source>
        <dbReference type="HAMAP-Rule" id="MF_00142"/>
    </source>
</evidence>
<feature type="chain" id="PRO_1000010935" description="Iron-sulfur cluster assembly protein CyaY">
    <location>
        <begin position="1"/>
        <end position="107"/>
    </location>
</feature>
<organism>
    <name type="scientific">Neisseria meningitidis serogroup C / serotype 2a (strain ATCC 700532 / DSM 15464 / FAM18)</name>
    <dbReference type="NCBI Taxonomy" id="272831"/>
    <lineage>
        <taxon>Bacteria</taxon>
        <taxon>Pseudomonadati</taxon>
        <taxon>Pseudomonadota</taxon>
        <taxon>Betaproteobacteria</taxon>
        <taxon>Neisseriales</taxon>
        <taxon>Neisseriaceae</taxon>
        <taxon>Neisseria</taxon>
    </lineage>
</organism>
<sequence>MMTESEFIRASEALFEHIEDQIDENGWDFDCRFAGNVLTIEAGDGTQIIVNRHTPNQELWIAAKSGGYHFAEQNGKWLATRDSRDFYDVLNEALSAASGEAVEIEEL</sequence>
<reference key="1">
    <citation type="journal article" date="2007" name="PLoS Genet.">
        <title>Meningococcal genetic variation mechanisms viewed through comparative analysis of serogroup C strain FAM18.</title>
        <authorList>
            <person name="Bentley S.D."/>
            <person name="Vernikos G.S."/>
            <person name="Snyder L.A.S."/>
            <person name="Churcher C."/>
            <person name="Arrowsmith C."/>
            <person name="Chillingworth T."/>
            <person name="Cronin A."/>
            <person name="Davis P.H."/>
            <person name="Holroyd N.E."/>
            <person name="Jagels K."/>
            <person name="Maddison M."/>
            <person name="Moule S."/>
            <person name="Rabbinowitsch E."/>
            <person name="Sharp S."/>
            <person name="Unwin L."/>
            <person name="Whitehead S."/>
            <person name="Quail M.A."/>
            <person name="Achtman M."/>
            <person name="Barrell B.G."/>
            <person name="Saunders N.J."/>
            <person name="Parkhill J."/>
        </authorList>
    </citation>
    <scope>NUCLEOTIDE SEQUENCE [LARGE SCALE GENOMIC DNA]</scope>
    <source>
        <strain>ATCC 700532 / DSM 15464 / FAM18</strain>
    </source>
</reference>
<protein>
    <recommendedName>
        <fullName evidence="1">Iron-sulfur cluster assembly protein CyaY</fullName>
    </recommendedName>
</protein>
<proteinExistence type="inferred from homology"/>
<accession>A1KW58</accession>